<dbReference type="EC" id="6.5.1.2" evidence="1"/>
<dbReference type="EMBL" id="CP000141">
    <property type="protein sequence ID" value="ABB14207.1"/>
    <property type="molecule type" value="Genomic_DNA"/>
</dbReference>
<dbReference type="RefSeq" id="WP_011344022.1">
    <property type="nucleotide sequence ID" value="NC_007503.1"/>
</dbReference>
<dbReference type="SMR" id="Q3AD38"/>
<dbReference type="FunCoup" id="Q3AD38">
    <property type="interactions" value="324"/>
</dbReference>
<dbReference type="STRING" id="246194.CHY_1100"/>
<dbReference type="KEGG" id="chy:CHY_1100"/>
<dbReference type="eggNOG" id="COG0272">
    <property type="taxonomic scope" value="Bacteria"/>
</dbReference>
<dbReference type="HOGENOM" id="CLU_007764_2_1_9"/>
<dbReference type="InParanoid" id="Q3AD38"/>
<dbReference type="OrthoDB" id="9759736at2"/>
<dbReference type="Proteomes" id="UP000002706">
    <property type="component" value="Chromosome"/>
</dbReference>
<dbReference type="GO" id="GO:0003677">
    <property type="term" value="F:DNA binding"/>
    <property type="evidence" value="ECO:0007669"/>
    <property type="project" value="InterPro"/>
</dbReference>
<dbReference type="GO" id="GO:0003911">
    <property type="term" value="F:DNA ligase (NAD+) activity"/>
    <property type="evidence" value="ECO:0007669"/>
    <property type="project" value="UniProtKB-UniRule"/>
</dbReference>
<dbReference type="GO" id="GO:0046872">
    <property type="term" value="F:metal ion binding"/>
    <property type="evidence" value="ECO:0007669"/>
    <property type="project" value="UniProtKB-KW"/>
</dbReference>
<dbReference type="GO" id="GO:0006281">
    <property type="term" value="P:DNA repair"/>
    <property type="evidence" value="ECO:0007669"/>
    <property type="project" value="UniProtKB-KW"/>
</dbReference>
<dbReference type="GO" id="GO:0006260">
    <property type="term" value="P:DNA replication"/>
    <property type="evidence" value="ECO:0007669"/>
    <property type="project" value="UniProtKB-KW"/>
</dbReference>
<dbReference type="CDD" id="cd17748">
    <property type="entry name" value="BRCT_DNA_ligase_like"/>
    <property type="match status" value="1"/>
</dbReference>
<dbReference type="CDD" id="cd00114">
    <property type="entry name" value="LIGANc"/>
    <property type="match status" value="1"/>
</dbReference>
<dbReference type="FunFam" id="1.10.150.20:FF:000006">
    <property type="entry name" value="DNA ligase"/>
    <property type="match status" value="1"/>
</dbReference>
<dbReference type="FunFam" id="1.10.150.20:FF:000007">
    <property type="entry name" value="DNA ligase"/>
    <property type="match status" value="1"/>
</dbReference>
<dbReference type="FunFam" id="1.10.287.610:FF:000002">
    <property type="entry name" value="DNA ligase"/>
    <property type="match status" value="1"/>
</dbReference>
<dbReference type="FunFam" id="2.40.50.140:FF:000012">
    <property type="entry name" value="DNA ligase"/>
    <property type="match status" value="1"/>
</dbReference>
<dbReference type="FunFam" id="3.30.470.30:FF:000001">
    <property type="entry name" value="DNA ligase"/>
    <property type="match status" value="1"/>
</dbReference>
<dbReference type="FunFam" id="3.40.50.10190:FF:000054">
    <property type="entry name" value="DNA ligase"/>
    <property type="match status" value="1"/>
</dbReference>
<dbReference type="Gene3D" id="6.20.10.30">
    <property type="match status" value="1"/>
</dbReference>
<dbReference type="Gene3D" id="1.10.150.20">
    <property type="entry name" value="5' to 3' exonuclease, C-terminal subdomain"/>
    <property type="match status" value="2"/>
</dbReference>
<dbReference type="Gene3D" id="3.40.50.10190">
    <property type="entry name" value="BRCT domain"/>
    <property type="match status" value="1"/>
</dbReference>
<dbReference type="Gene3D" id="3.30.470.30">
    <property type="entry name" value="DNA ligase/mRNA capping enzyme"/>
    <property type="match status" value="1"/>
</dbReference>
<dbReference type="Gene3D" id="1.10.287.610">
    <property type="entry name" value="Helix hairpin bin"/>
    <property type="match status" value="1"/>
</dbReference>
<dbReference type="Gene3D" id="2.40.50.140">
    <property type="entry name" value="Nucleic acid-binding proteins"/>
    <property type="match status" value="1"/>
</dbReference>
<dbReference type="HAMAP" id="MF_01588">
    <property type="entry name" value="DNA_ligase_A"/>
    <property type="match status" value="1"/>
</dbReference>
<dbReference type="InterPro" id="IPR001357">
    <property type="entry name" value="BRCT_dom"/>
</dbReference>
<dbReference type="InterPro" id="IPR036420">
    <property type="entry name" value="BRCT_dom_sf"/>
</dbReference>
<dbReference type="InterPro" id="IPR041663">
    <property type="entry name" value="DisA/LigA_HHH"/>
</dbReference>
<dbReference type="InterPro" id="IPR001679">
    <property type="entry name" value="DNA_ligase"/>
</dbReference>
<dbReference type="InterPro" id="IPR018239">
    <property type="entry name" value="DNA_ligase_AS"/>
</dbReference>
<dbReference type="InterPro" id="IPR033136">
    <property type="entry name" value="DNA_ligase_CS"/>
</dbReference>
<dbReference type="InterPro" id="IPR013839">
    <property type="entry name" value="DNAligase_adenylation"/>
</dbReference>
<dbReference type="InterPro" id="IPR013840">
    <property type="entry name" value="DNAligase_N"/>
</dbReference>
<dbReference type="InterPro" id="IPR003583">
    <property type="entry name" value="Hlx-hairpin-Hlx_DNA-bd_motif"/>
</dbReference>
<dbReference type="InterPro" id="IPR012340">
    <property type="entry name" value="NA-bd_OB-fold"/>
</dbReference>
<dbReference type="InterPro" id="IPR004150">
    <property type="entry name" value="NAD_DNA_ligase_OB"/>
</dbReference>
<dbReference type="InterPro" id="IPR010994">
    <property type="entry name" value="RuvA_2-like"/>
</dbReference>
<dbReference type="InterPro" id="IPR004149">
    <property type="entry name" value="Znf_DNAligase_C4"/>
</dbReference>
<dbReference type="NCBIfam" id="TIGR00575">
    <property type="entry name" value="dnlj"/>
    <property type="match status" value="1"/>
</dbReference>
<dbReference type="NCBIfam" id="NF005932">
    <property type="entry name" value="PRK07956.1"/>
    <property type="match status" value="1"/>
</dbReference>
<dbReference type="PANTHER" id="PTHR23389">
    <property type="entry name" value="CHROMOSOME TRANSMISSION FIDELITY FACTOR 18"/>
    <property type="match status" value="1"/>
</dbReference>
<dbReference type="PANTHER" id="PTHR23389:SF6">
    <property type="entry name" value="REPLICATION FACTOR C SUBUNIT 1"/>
    <property type="match status" value="1"/>
</dbReference>
<dbReference type="Pfam" id="PF00533">
    <property type="entry name" value="BRCT"/>
    <property type="match status" value="1"/>
</dbReference>
<dbReference type="Pfam" id="PF01653">
    <property type="entry name" value="DNA_ligase_aden"/>
    <property type="match status" value="1"/>
</dbReference>
<dbReference type="Pfam" id="PF03120">
    <property type="entry name" value="DNA_ligase_OB"/>
    <property type="match status" value="1"/>
</dbReference>
<dbReference type="Pfam" id="PF03119">
    <property type="entry name" value="DNA_ligase_ZBD"/>
    <property type="match status" value="1"/>
</dbReference>
<dbReference type="Pfam" id="PF12826">
    <property type="entry name" value="HHH_2"/>
    <property type="match status" value="1"/>
</dbReference>
<dbReference type="Pfam" id="PF14520">
    <property type="entry name" value="HHH_5"/>
    <property type="match status" value="1"/>
</dbReference>
<dbReference type="Pfam" id="PF22745">
    <property type="entry name" value="Nlig-Ia"/>
    <property type="match status" value="1"/>
</dbReference>
<dbReference type="PIRSF" id="PIRSF001604">
    <property type="entry name" value="LigA"/>
    <property type="match status" value="1"/>
</dbReference>
<dbReference type="SMART" id="SM00292">
    <property type="entry name" value="BRCT"/>
    <property type="match status" value="1"/>
</dbReference>
<dbReference type="SMART" id="SM00278">
    <property type="entry name" value="HhH1"/>
    <property type="match status" value="3"/>
</dbReference>
<dbReference type="SMART" id="SM00532">
    <property type="entry name" value="LIGANc"/>
    <property type="match status" value="1"/>
</dbReference>
<dbReference type="SUPFAM" id="SSF52113">
    <property type="entry name" value="BRCT domain"/>
    <property type="match status" value="1"/>
</dbReference>
<dbReference type="SUPFAM" id="SSF56091">
    <property type="entry name" value="DNA ligase/mRNA capping enzyme, catalytic domain"/>
    <property type="match status" value="1"/>
</dbReference>
<dbReference type="SUPFAM" id="SSF50249">
    <property type="entry name" value="Nucleic acid-binding proteins"/>
    <property type="match status" value="1"/>
</dbReference>
<dbReference type="SUPFAM" id="SSF47781">
    <property type="entry name" value="RuvA domain 2-like"/>
    <property type="match status" value="1"/>
</dbReference>
<dbReference type="PROSITE" id="PS50172">
    <property type="entry name" value="BRCT"/>
    <property type="match status" value="1"/>
</dbReference>
<dbReference type="PROSITE" id="PS01055">
    <property type="entry name" value="DNA_LIGASE_N1"/>
    <property type="match status" value="1"/>
</dbReference>
<dbReference type="PROSITE" id="PS01056">
    <property type="entry name" value="DNA_LIGASE_N2"/>
    <property type="match status" value="1"/>
</dbReference>
<reference key="1">
    <citation type="journal article" date="2005" name="PLoS Genet.">
        <title>Life in hot carbon monoxide: the complete genome sequence of Carboxydothermus hydrogenoformans Z-2901.</title>
        <authorList>
            <person name="Wu M."/>
            <person name="Ren Q."/>
            <person name="Durkin A.S."/>
            <person name="Daugherty S.C."/>
            <person name="Brinkac L.M."/>
            <person name="Dodson R.J."/>
            <person name="Madupu R."/>
            <person name="Sullivan S.A."/>
            <person name="Kolonay J.F."/>
            <person name="Nelson W.C."/>
            <person name="Tallon L.J."/>
            <person name="Jones K.M."/>
            <person name="Ulrich L.E."/>
            <person name="Gonzalez J.M."/>
            <person name="Zhulin I.B."/>
            <person name="Robb F.T."/>
            <person name="Eisen J.A."/>
        </authorList>
    </citation>
    <scope>NUCLEOTIDE SEQUENCE [LARGE SCALE GENOMIC DNA]</scope>
    <source>
        <strain>ATCC BAA-161 / DSM 6008 / Z-2901</strain>
    </source>
</reference>
<comment type="function">
    <text evidence="1">DNA ligase that catalyzes the formation of phosphodiester linkages between 5'-phosphoryl and 3'-hydroxyl groups in double-stranded DNA using NAD as a coenzyme and as the energy source for the reaction. It is essential for DNA replication and repair of damaged DNA.</text>
</comment>
<comment type="catalytic activity">
    <reaction evidence="1">
        <text>NAD(+) + (deoxyribonucleotide)n-3'-hydroxyl + 5'-phospho-(deoxyribonucleotide)m = (deoxyribonucleotide)n+m + AMP + beta-nicotinamide D-nucleotide.</text>
        <dbReference type="EC" id="6.5.1.2"/>
    </reaction>
</comment>
<comment type="cofactor">
    <cofactor evidence="1">
        <name>Mg(2+)</name>
        <dbReference type="ChEBI" id="CHEBI:18420"/>
    </cofactor>
    <cofactor evidence="1">
        <name>Mn(2+)</name>
        <dbReference type="ChEBI" id="CHEBI:29035"/>
    </cofactor>
</comment>
<comment type="similarity">
    <text evidence="1">Belongs to the NAD-dependent DNA ligase family. LigA subfamily.</text>
</comment>
<evidence type="ECO:0000255" key="1">
    <source>
        <dbReference type="HAMAP-Rule" id="MF_01588"/>
    </source>
</evidence>
<sequence>MDKEAVKKRIEELRALLHYHNYRYYVLDQPEISDAEYDRMLRELISLEQQYPEFITPDSPSQRVGGEVAKEFREVAHLKPMYSLDNAFGPEDLKEFDRRVRSLLPGQEVEYEVELKIDGLAISLVYENGVLVRGATRGNGTTGEDITANVKTIKAIPLKLRNPIPLLEVRGEAYMPKESFARLNEQREERGEPLFANPRNAAAGSLRQLDPKVTAERDLSAFMYAIGEVQGYEPKTQAELMEWLSELGFKVNPYREVFNNIDDVINYCQSWHEKRFSLPYVIDGLVIKVNSLAQQEALGFTAKSPRWAIAYKFPAEIAETRLKDIIVRVGRTGVLTPTAIFEPVSLAGTTVTRASLHNEDYIREKDIRIGDIIRVQKAGEIIPEVVEVVKEKRTGAEKEFVMPDTCPVCQGKAVRLPGEAAWRCTNASCPAQLKEGIVHFASRGAMNIEGLGPAVAELLLEAGLIHNYADLYYLSAEEVARLPRMGKKSAENLINAIEKSKQNSLERLIYGLGIRLVGEKAARDLAVHFKELDKLIAAGEEEIMAIPSVGPKMAASIKAFFAQKENLELIEKLKAAGVNTKYLAEVRDNRLEGLTFVLTGTLSSFTRKEAEQLILSLGGKVSSSVSKKTSYVVVGEDPGSKLTKAKELGIPILTEEEFRQMVMS</sequence>
<keyword id="KW-0227">DNA damage</keyword>
<keyword id="KW-0234">DNA repair</keyword>
<keyword id="KW-0235">DNA replication</keyword>
<keyword id="KW-0436">Ligase</keyword>
<keyword id="KW-0460">Magnesium</keyword>
<keyword id="KW-0464">Manganese</keyword>
<keyword id="KW-0479">Metal-binding</keyword>
<keyword id="KW-0520">NAD</keyword>
<keyword id="KW-1185">Reference proteome</keyword>
<keyword id="KW-0862">Zinc</keyword>
<accession>Q3AD38</accession>
<name>DNLJ_CARHZ</name>
<protein>
    <recommendedName>
        <fullName evidence="1">DNA ligase</fullName>
        <ecNumber evidence="1">6.5.1.2</ecNumber>
    </recommendedName>
    <alternativeName>
        <fullName evidence="1">Polydeoxyribonucleotide synthase [NAD(+)]</fullName>
    </alternativeName>
</protein>
<gene>
    <name evidence="1" type="primary">ligA</name>
    <name type="ordered locus">CHY_1100</name>
</gene>
<organism>
    <name type="scientific">Carboxydothermus hydrogenoformans (strain ATCC BAA-161 / DSM 6008 / Z-2901)</name>
    <dbReference type="NCBI Taxonomy" id="246194"/>
    <lineage>
        <taxon>Bacteria</taxon>
        <taxon>Bacillati</taxon>
        <taxon>Bacillota</taxon>
        <taxon>Clostridia</taxon>
        <taxon>Thermoanaerobacterales</taxon>
        <taxon>Thermoanaerobacteraceae</taxon>
        <taxon>Carboxydothermus</taxon>
    </lineage>
</organism>
<feature type="chain" id="PRO_0000313179" description="DNA ligase">
    <location>
        <begin position="1"/>
        <end position="664"/>
    </location>
</feature>
<feature type="domain" description="BRCT" evidence="1">
    <location>
        <begin position="586"/>
        <end position="664"/>
    </location>
</feature>
<feature type="active site" description="N6-AMP-lysine intermediate" evidence="1">
    <location>
        <position position="116"/>
    </location>
</feature>
<feature type="binding site" evidence="1">
    <location>
        <begin position="34"/>
        <end position="38"/>
    </location>
    <ligand>
        <name>NAD(+)</name>
        <dbReference type="ChEBI" id="CHEBI:57540"/>
    </ligand>
</feature>
<feature type="binding site" evidence="1">
    <location>
        <begin position="83"/>
        <end position="84"/>
    </location>
    <ligand>
        <name>NAD(+)</name>
        <dbReference type="ChEBI" id="CHEBI:57540"/>
    </ligand>
</feature>
<feature type="binding site" evidence="1">
    <location>
        <position position="114"/>
    </location>
    <ligand>
        <name>NAD(+)</name>
        <dbReference type="ChEBI" id="CHEBI:57540"/>
    </ligand>
</feature>
<feature type="binding site" evidence="1">
    <location>
        <position position="137"/>
    </location>
    <ligand>
        <name>NAD(+)</name>
        <dbReference type="ChEBI" id="CHEBI:57540"/>
    </ligand>
</feature>
<feature type="binding site" evidence="1">
    <location>
        <position position="172"/>
    </location>
    <ligand>
        <name>NAD(+)</name>
        <dbReference type="ChEBI" id="CHEBI:57540"/>
    </ligand>
</feature>
<feature type="binding site" evidence="1">
    <location>
        <position position="288"/>
    </location>
    <ligand>
        <name>NAD(+)</name>
        <dbReference type="ChEBI" id="CHEBI:57540"/>
    </ligand>
</feature>
<feature type="binding site" evidence="1">
    <location>
        <position position="312"/>
    </location>
    <ligand>
        <name>NAD(+)</name>
        <dbReference type="ChEBI" id="CHEBI:57540"/>
    </ligand>
</feature>
<feature type="binding site" evidence="1">
    <location>
        <position position="406"/>
    </location>
    <ligand>
        <name>Zn(2+)</name>
        <dbReference type="ChEBI" id="CHEBI:29105"/>
    </ligand>
</feature>
<feature type="binding site" evidence="1">
    <location>
        <position position="409"/>
    </location>
    <ligand>
        <name>Zn(2+)</name>
        <dbReference type="ChEBI" id="CHEBI:29105"/>
    </ligand>
</feature>
<feature type="binding site" evidence="1">
    <location>
        <position position="424"/>
    </location>
    <ligand>
        <name>Zn(2+)</name>
        <dbReference type="ChEBI" id="CHEBI:29105"/>
    </ligand>
</feature>
<feature type="binding site" evidence="1">
    <location>
        <position position="429"/>
    </location>
    <ligand>
        <name>Zn(2+)</name>
        <dbReference type="ChEBI" id="CHEBI:29105"/>
    </ligand>
</feature>
<proteinExistence type="inferred from homology"/>